<keyword id="KW-0413">Isomerase</keyword>
<feature type="chain" id="PRO_1000016900" description="Ribose-5-phosphate isomerase A">
    <location>
        <begin position="1"/>
        <end position="236"/>
    </location>
</feature>
<feature type="active site" description="Proton acceptor" evidence="1">
    <location>
        <position position="112"/>
    </location>
</feature>
<feature type="binding site" evidence="1">
    <location>
        <begin position="33"/>
        <end position="36"/>
    </location>
    <ligand>
        <name>substrate</name>
    </ligand>
</feature>
<feature type="binding site" evidence="1">
    <location>
        <begin position="90"/>
        <end position="93"/>
    </location>
    <ligand>
        <name>substrate</name>
    </ligand>
</feature>
<feature type="binding site" evidence="1">
    <location>
        <begin position="103"/>
        <end position="106"/>
    </location>
    <ligand>
        <name>substrate</name>
    </ligand>
</feature>
<feature type="binding site" evidence="1">
    <location>
        <position position="130"/>
    </location>
    <ligand>
        <name>substrate</name>
    </ligand>
</feature>
<proteinExistence type="inferred from homology"/>
<name>RPIA_TRIV2</name>
<evidence type="ECO:0000255" key="1">
    <source>
        <dbReference type="HAMAP-Rule" id="MF_00170"/>
    </source>
</evidence>
<reference key="1">
    <citation type="journal article" date="2014" name="Stand. Genomic Sci.">
        <title>Complete genome sequence of Anabaena variabilis ATCC 29413.</title>
        <authorList>
            <person name="Thiel T."/>
            <person name="Pratte B.S."/>
            <person name="Zhong J."/>
            <person name="Goodwin L."/>
            <person name="Copeland A."/>
            <person name="Lucas S."/>
            <person name="Han C."/>
            <person name="Pitluck S."/>
            <person name="Land M.L."/>
            <person name="Kyrpides N.C."/>
            <person name="Woyke T."/>
        </authorList>
    </citation>
    <scope>NUCLEOTIDE SEQUENCE [LARGE SCALE GENOMIC DNA]</scope>
    <source>
        <strain>ATCC 29413 / PCC 7937</strain>
    </source>
</reference>
<gene>
    <name evidence="1" type="primary">rpiA</name>
    <name type="ordered locus">Ava_4491</name>
</gene>
<protein>
    <recommendedName>
        <fullName evidence="1">Ribose-5-phosphate isomerase A</fullName>
        <ecNumber evidence="1">5.3.1.6</ecNumber>
    </recommendedName>
    <alternativeName>
        <fullName evidence="1">Phosphoriboisomerase A</fullName>
        <shortName evidence="1">PRI</shortName>
    </alternativeName>
</protein>
<dbReference type="EC" id="5.3.1.6" evidence="1"/>
<dbReference type="EMBL" id="CP000117">
    <property type="protein sequence ID" value="ABA24089.1"/>
    <property type="molecule type" value="Genomic_DNA"/>
</dbReference>
<dbReference type="SMR" id="Q3M4J7"/>
<dbReference type="STRING" id="240292.Ava_4491"/>
<dbReference type="KEGG" id="ava:Ava_4491"/>
<dbReference type="eggNOG" id="COG0120">
    <property type="taxonomic scope" value="Bacteria"/>
</dbReference>
<dbReference type="HOGENOM" id="CLU_056590_1_1_3"/>
<dbReference type="UniPathway" id="UPA00115">
    <property type="reaction ID" value="UER00412"/>
</dbReference>
<dbReference type="Proteomes" id="UP000002533">
    <property type="component" value="Chromosome"/>
</dbReference>
<dbReference type="GO" id="GO:0005829">
    <property type="term" value="C:cytosol"/>
    <property type="evidence" value="ECO:0007669"/>
    <property type="project" value="TreeGrafter"/>
</dbReference>
<dbReference type="GO" id="GO:0004751">
    <property type="term" value="F:ribose-5-phosphate isomerase activity"/>
    <property type="evidence" value="ECO:0007669"/>
    <property type="project" value="UniProtKB-UniRule"/>
</dbReference>
<dbReference type="GO" id="GO:0006014">
    <property type="term" value="P:D-ribose metabolic process"/>
    <property type="evidence" value="ECO:0007669"/>
    <property type="project" value="TreeGrafter"/>
</dbReference>
<dbReference type="GO" id="GO:0009052">
    <property type="term" value="P:pentose-phosphate shunt, non-oxidative branch"/>
    <property type="evidence" value="ECO:0007669"/>
    <property type="project" value="UniProtKB-UniRule"/>
</dbReference>
<dbReference type="CDD" id="cd01398">
    <property type="entry name" value="RPI_A"/>
    <property type="match status" value="1"/>
</dbReference>
<dbReference type="FunFam" id="3.30.70.260:FF:000018">
    <property type="entry name" value="Ribose-5-phosphate isomerase A"/>
    <property type="match status" value="1"/>
</dbReference>
<dbReference type="FunFam" id="3.40.50.1360:FF:000001">
    <property type="entry name" value="Ribose-5-phosphate isomerase A"/>
    <property type="match status" value="1"/>
</dbReference>
<dbReference type="Gene3D" id="3.30.70.260">
    <property type="match status" value="1"/>
</dbReference>
<dbReference type="Gene3D" id="3.40.50.1360">
    <property type="match status" value="1"/>
</dbReference>
<dbReference type="HAMAP" id="MF_00170">
    <property type="entry name" value="Rib_5P_isom_A"/>
    <property type="match status" value="1"/>
</dbReference>
<dbReference type="InterPro" id="IPR037171">
    <property type="entry name" value="NagB/RpiA_transferase-like"/>
</dbReference>
<dbReference type="InterPro" id="IPR020672">
    <property type="entry name" value="Ribose5P_isomerase_typA_subgr"/>
</dbReference>
<dbReference type="InterPro" id="IPR004788">
    <property type="entry name" value="Ribose5P_isomerase_type_A"/>
</dbReference>
<dbReference type="NCBIfam" id="NF001924">
    <property type="entry name" value="PRK00702.1"/>
    <property type="match status" value="1"/>
</dbReference>
<dbReference type="NCBIfam" id="TIGR00021">
    <property type="entry name" value="rpiA"/>
    <property type="match status" value="1"/>
</dbReference>
<dbReference type="PANTHER" id="PTHR11934">
    <property type="entry name" value="RIBOSE-5-PHOSPHATE ISOMERASE"/>
    <property type="match status" value="1"/>
</dbReference>
<dbReference type="PANTHER" id="PTHR11934:SF0">
    <property type="entry name" value="RIBOSE-5-PHOSPHATE ISOMERASE"/>
    <property type="match status" value="1"/>
</dbReference>
<dbReference type="Pfam" id="PF06026">
    <property type="entry name" value="Rib_5-P_isom_A"/>
    <property type="match status" value="1"/>
</dbReference>
<dbReference type="SUPFAM" id="SSF75445">
    <property type="entry name" value="D-ribose-5-phosphate isomerase (RpiA), lid domain"/>
    <property type="match status" value="1"/>
</dbReference>
<dbReference type="SUPFAM" id="SSF100950">
    <property type="entry name" value="NagB/RpiA/CoA transferase-like"/>
    <property type="match status" value="1"/>
</dbReference>
<organism>
    <name type="scientific">Trichormus variabilis (strain ATCC 29413 / PCC 7937)</name>
    <name type="common">Anabaena variabilis</name>
    <dbReference type="NCBI Taxonomy" id="240292"/>
    <lineage>
        <taxon>Bacteria</taxon>
        <taxon>Bacillati</taxon>
        <taxon>Cyanobacteriota</taxon>
        <taxon>Cyanophyceae</taxon>
        <taxon>Nostocales</taxon>
        <taxon>Nostocaceae</taxon>
        <taxon>Trichormus</taxon>
    </lineage>
</organism>
<accession>Q3M4J7</accession>
<comment type="function">
    <text evidence="1">Catalyzes the reversible conversion of ribose-5-phosphate to ribulose 5-phosphate.</text>
</comment>
<comment type="catalytic activity">
    <reaction evidence="1">
        <text>aldehydo-D-ribose 5-phosphate = D-ribulose 5-phosphate</text>
        <dbReference type="Rhea" id="RHEA:14657"/>
        <dbReference type="ChEBI" id="CHEBI:58121"/>
        <dbReference type="ChEBI" id="CHEBI:58273"/>
        <dbReference type="EC" id="5.3.1.6"/>
    </reaction>
</comment>
<comment type="pathway">
    <text evidence="1">Carbohydrate degradation; pentose phosphate pathway; D-ribose 5-phosphate from D-ribulose 5-phosphate (non-oxidative stage): step 1/1.</text>
</comment>
<comment type="subunit">
    <text evidence="1">Homodimer.</text>
</comment>
<comment type="similarity">
    <text evidence="1">Belongs to the ribose 5-phosphate isomerase family.</text>
</comment>
<sequence>MTVTADPVTLMKQEVGKAAAALVKSGSIVGLGTGSTTAYTIQYLGDRLKSGELTDIVGIPTSFQSEVLSKQYGVPLTTLDAVDHIDIAIDGADEVDPQKNLIKGGGAAHTREKVVDYLANQFIVVVDSGKLVDRLGSVFAVPVEVIPMAITPVTNAIKQLGGKPELRMGVKKAGPVITDQGNFVLDVRFDSIDDPVNLEKILNNIPGVLENGIFVNCADIVLVGEVKDGQPLVRQL</sequence>